<accession>P66745</accession>
<accession>A0A1R3Y1N8</accession>
<accession>Q50628</accession>
<accession>X2BLD5</accession>
<sequence length="196" mass="20189">MIASVRGEVLEVALDHVVIEAAGVGYRVNATPATLATLRQGTEARLITAMIVREDSMTLYGFPDGETRDLFLTLLSVSGVGPRLAMAALAVHDAPALRQVLADGNVAALTRVPGIGKRGAERMVLELRDKVGVAATGGALSTNGHAVRSPVVEALVGLGFAAKQAEEATDTVLAANHDATTSSALRSALSLLGKAR</sequence>
<feature type="chain" id="PRO_0000094654" description="Holliday junction branch migration complex subunit RuvA">
    <location>
        <begin position="1"/>
        <end position="196"/>
    </location>
</feature>
<feature type="region of interest" description="Domain I" evidence="1">
    <location>
        <begin position="1"/>
        <end position="63"/>
    </location>
</feature>
<feature type="region of interest" description="Domain II" evidence="1">
    <location>
        <begin position="64"/>
        <end position="138"/>
    </location>
</feature>
<feature type="region of interest" description="Flexible linker" evidence="1">
    <location>
        <begin position="138"/>
        <end position="142"/>
    </location>
</feature>
<feature type="region of interest" description="Domain III" evidence="1">
    <location>
        <begin position="143"/>
        <end position="196"/>
    </location>
</feature>
<proteinExistence type="inferred from homology"/>
<dbReference type="EMBL" id="LT708304">
    <property type="protein sequence ID" value="SIU01242.1"/>
    <property type="molecule type" value="Genomic_DNA"/>
</dbReference>
<dbReference type="RefSeq" id="NP_856270.1">
    <property type="nucleotide sequence ID" value="NC_002945.3"/>
</dbReference>
<dbReference type="RefSeq" id="WP_003413421.1">
    <property type="nucleotide sequence ID" value="NC_002945.4"/>
</dbReference>
<dbReference type="SMR" id="P66745"/>
<dbReference type="GeneID" id="45426595"/>
<dbReference type="KEGG" id="mbo:BQ2027_MB2624C"/>
<dbReference type="PATRIC" id="fig|233413.5.peg.2885"/>
<dbReference type="Proteomes" id="UP000001419">
    <property type="component" value="Chromosome"/>
</dbReference>
<dbReference type="GO" id="GO:0005737">
    <property type="term" value="C:cytoplasm"/>
    <property type="evidence" value="ECO:0007669"/>
    <property type="project" value="UniProtKB-SubCell"/>
</dbReference>
<dbReference type="GO" id="GO:0009379">
    <property type="term" value="C:Holliday junction helicase complex"/>
    <property type="evidence" value="ECO:0007669"/>
    <property type="project" value="InterPro"/>
</dbReference>
<dbReference type="GO" id="GO:0048476">
    <property type="term" value="C:Holliday junction resolvase complex"/>
    <property type="evidence" value="ECO:0007669"/>
    <property type="project" value="UniProtKB-UniRule"/>
</dbReference>
<dbReference type="GO" id="GO:0005524">
    <property type="term" value="F:ATP binding"/>
    <property type="evidence" value="ECO:0007669"/>
    <property type="project" value="InterPro"/>
</dbReference>
<dbReference type="GO" id="GO:0000400">
    <property type="term" value="F:four-way junction DNA binding"/>
    <property type="evidence" value="ECO:0007669"/>
    <property type="project" value="UniProtKB-UniRule"/>
</dbReference>
<dbReference type="GO" id="GO:0009378">
    <property type="term" value="F:four-way junction helicase activity"/>
    <property type="evidence" value="ECO:0007669"/>
    <property type="project" value="InterPro"/>
</dbReference>
<dbReference type="GO" id="GO:0006310">
    <property type="term" value="P:DNA recombination"/>
    <property type="evidence" value="ECO:0007669"/>
    <property type="project" value="UniProtKB-UniRule"/>
</dbReference>
<dbReference type="GO" id="GO:0006281">
    <property type="term" value="P:DNA repair"/>
    <property type="evidence" value="ECO:0007669"/>
    <property type="project" value="UniProtKB-UniRule"/>
</dbReference>
<dbReference type="CDD" id="cd14332">
    <property type="entry name" value="UBA_RuvA_C"/>
    <property type="match status" value="1"/>
</dbReference>
<dbReference type="FunFam" id="1.10.150.20:FF:000093">
    <property type="entry name" value="Holliday junction ATP-dependent DNA helicase RuvA"/>
    <property type="match status" value="1"/>
</dbReference>
<dbReference type="FunFam" id="2.40.50.140:FF:000083">
    <property type="entry name" value="Holliday junction ATP-dependent DNA helicase RuvA"/>
    <property type="match status" value="1"/>
</dbReference>
<dbReference type="Gene3D" id="1.10.150.20">
    <property type="entry name" value="5' to 3' exonuclease, C-terminal subdomain"/>
    <property type="match status" value="1"/>
</dbReference>
<dbReference type="Gene3D" id="1.10.8.10">
    <property type="entry name" value="DNA helicase RuvA subunit, C-terminal domain"/>
    <property type="match status" value="1"/>
</dbReference>
<dbReference type="Gene3D" id="2.40.50.140">
    <property type="entry name" value="Nucleic acid-binding proteins"/>
    <property type="match status" value="1"/>
</dbReference>
<dbReference type="HAMAP" id="MF_00031">
    <property type="entry name" value="DNA_HJ_migration_RuvA"/>
    <property type="match status" value="1"/>
</dbReference>
<dbReference type="InterPro" id="IPR013849">
    <property type="entry name" value="DNA_helicase_Holl-junc_RuvA_I"/>
</dbReference>
<dbReference type="InterPro" id="IPR003583">
    <property type="entry name" value="Hlx-hairpin-Hlx_DNA-bd_motif"/>
</dbReference>
<dbReference type="InterPro" id="IPR012340">
    <property type="entry name" value="NA-bd_OB-fold"/>
</dbReference>
<dbReference type="InterPro" id="IPR000085">
    <property type="entry name" value="RuvA"/>
</dbReference>
<dbReference type="InterPro" id="IPR010994">
    <property type="entry name" value="RuvA_2-like"/>
</dbReference>
<dbReference type="InterPro" id="IPR011114">
    <property type="entry name" value="RuvA_C"/>
</dbReference>
<dbReference type="InterPro" id="IPR036267">
    <property type="entry name" value="RuvA_C_sf"/>
</dbReference>
<dbReference type="NCBIfam" id="TIGR00084">
    <property type="entry name" value="ruvA"/>
    <property type="match status" value="1"/>
</dbReference>
<dbReference type="Pfam" id="PF14520">
    <property type="entry name" value="HHH_5"/>
    <property type="match status" value="1"/>
</dbReference>
<dbReference type="Pfam" id="PF07499">
    <property type="entry name" value="RuvA_C"/>
    <property type="match status" value="1"/>
</dbReference>
<dbReference type="Pfam" id="PF01330">
    <property type="entry name" value="RuvA_N"/>
    <property type="match status" value="1"/>
</dbReference>
<dbReference type="SMART" id="SM00278">
    <property type="entry name" value="HhH1"/>
    <property type="match status" value="2"/>
</dbReference>
<dbReference type="SUPFAM" id="SSF46929">
    <property type="entry name" value="DNA helicase RuvA subunit, C-terminal domain"/>
    <property type="match status" value="1"/>
</dbReference>
<dbReference type="SUPFAM" id="SSF50249">
    <property type="entry name" value="Nucleic acid-binding proteins"/>
    <property type="match status" value="1"/>
</dbReference>
<dbReference type="SUPFAM" id="SSF47781">
    <property type="entry name" value="RuvA domain 2-like"/>
    <property type="match status" value="1"/>
</dbReference>
<gene>
    <name evidence="1" type="primary">ruvA</name>
    <name type="ordered locus">BQ2027_MB2624C</name>
</gene>
<comment type="function">
    <text evidence="1">The RuvA-RuvB-RuvC complex processes Holliday junction (HJ) DNA during genetic recombination and DNA repair, while the RuvA-RuvB complex plays an important role in the rescue of blocked DNA replication forks via replication fork reversal (RFR). RuvA specifically binds to HJ cruciform DNA, conferring on it an open structure. The RuvB hexamer acts as an ATP-dependent pump, pulling dsDNA into and through the RuvAB complex. HJ branch migration allows RuvC to scan DNA until it finds its consensus sequence, where it cleaves and resolves the cruciform DNA.</text>
</comment>
<comment type="subunit">
    <text evidence="1">Homotetramer. Forms an RuvA(8)-RuvB(12)-Holliday junction (HJ) complex. HJ DNA is sandwiched between 2 RuvA tetramers; dsDNA enters through RuvA and exits via RuvB. An RuvB hexamer assembles on each DNA strand where it exits the tetramer. Each RuvB hexamer is contacted by two RuvA subunits (via domain III) on 2 adjacent RuvB subunits; this complex drives branch migration. In the full resolvosome a probable DNA-RuvA(4)-RuvB(12)-RuvC(2) complex forms which resolves the HJ.</text>
</comment>
<comment type="subcellular location">
    <subcellularLocation>
        <location evidence="1">Cytoplasm</location>
    </subcellularLocation>
</comment>
<comment type="domain">
    <text evidence="1">Has three domains with a flexible linker between the domains II and III and assumes an 'L' shape. Domain III is highly mobile and contacts RuvB.</text>
</comment>
<comment type="similarity">
    <text evidence="1">Belongs to the RuvA family.</text>
</comment>
<evidence type="ECO:0000255" key="1">
    <source>
        <dbReference type="HAMAP-Rule" id="MF_00031"/>
    </source>
</evidence>
<organism>
    <name type="scientific">Mycobacterium bovis (strain ATCC BAA-935 / AF2122/97)</name>
    <dbReference type="NCBI Taxonomy" id="233413"/>
    <lineage>
        <taxon>Bacteria</taxon>
        <taxon>Bacillati</taxon>
        <taxon>Actinomycetota</taxon>
        <taxon>Actinomycetes</taxon>
        <taxon>Mycobacteriales</taxon>
        <taxon>Mycobacteriaceae</taxon>
        <taxon>Mycobacterium</taxon>
        <taxon>Mycobacterium tuberculosis complex</taxon>
    </lineage>
</organism>
<reference key="1">
    <citation type="journal article" date="2003" name="Proc. Natl. Acad. Sci. U.S.A.">
        <title>The complete genome sequence of Mycobacterium bovis.</title>
        <authorList>
            <person name="Garnier T."/>
            <person name="Eiglmeier K."/>
            <person name="Camus J.-C."/>
            <person name="Medina N."/>
            <person name="Mansoor H."/>
            <person name="Pryor M."/>
            <person name="Duthoy S."/>
            <person name="Grondin S."/>
            <person name="Lacroix C."/>
            <person name="Monsempe C."/>
            <person name="Simon S."/>
            <person name="Harris B."/>
            <person name="Atkin R."/>
            <person name="Doggett J."/>
            <person name="Mayes R."/>
            <person name="Keating L."/>
            <person name="Wheeler P.R."/>
            <person name="Parkhill J."/>
            <person name="Barrell B.G."/>
            <person name="Cole S.T."/>
            <person name="Gordon S.V."/>
            <person name="Hewinson R.G."/>
        </authorList>
    </citation>
    <scope>NUCLEOTIDE SEQUENCE [LARGE SCALE GENOMIC DNA]</scope>
    <source>
        <strain>ATCC BAA-935 / AF2122/97</strain>
    </source>
</reference>
<reference key="2">
    <citation type="journal article" date="2017" name="Genome Announc.">
        <title>Updated reference genome sequence and annotation of Mycobacterium bovis AF2122/97.</title>
        <authorList>
            <person name="Malone K.M."/>
            <person name="Farrell D."/>
            <person name="Stuber T.P."/>
            <person name="Schubert O.T."/>
            <person name="Aebersold R."/>
            <person name="Robbe-Austerman S."/>
            <person name="Gordon S.V."/>
        </authorList>
    </citation>
    <scope>NUCLEOTIDE SEQUENCE [LARGE SCALE GENOMIC DNA]</scope>
    <scope>GENOME REANNOTATION</scope>
    <source>
        <strain>ATCC BAA-935 / AF2122/97</strain>
    </source>
</reference>
<protein>
    <recommendedName>
        <fullName evidence="1">Holliday junction branch migration complex subunit RuvA</fullName>
    </recommendedName>
</protein>
<keyword id="KW-0963">Cytoplasm</keyword>
<keyword id="KW-0227">DNA damage</keyword>
<keyword id="KW-0233">DNA recombination</keyword>
<keyword id="KW-0234">DNA repair</keyword>
<keyword id="KW-0238">DNA-binding</keyword>
<keyword id="KW-1185">Reference proteome</keyword>
<name>RUVA_MYCBO</name>